<sequence>IALQSPAGAARIRDYLYNELSK</sequence>
<keyword id="KW-0903">Direct protein sequencing</keyword>
<keyword id="KW-0378">Hydrolase</keyword>
<keyword id="KW-0645">Protease</keyword>
<keyword id="KW-1185">Reference proteome</keyword>
<keyword id="KW-0720">Serine protease</keyword>
<evidence type="ECO:0000250" key="1">
    <source>
        <dbReference type="UniProtKB" id="Q3MDK7"/>
    </source>
</evidence>
<evidence type="ECO:0000255" key="2"/>
<evidence type="ECO:0000255" key="3">
    <source>
        <dbReference type="PROSITE-ProRule" id="PRU10085"/>
    </source>
</evidence>
<evidence type="ECO:0000255" key="4">
    <source>
        <dbReference type="PROSITE-ProRule" id="PRU10086"/>
    </source>
</evidence>
<evidence type="ECO:0000269" key="5">
    <source ref="1"/>
</evidence>
<evidence type="ECO:0000303" key="6">
    <source ref="1"/>
</evidence>
<evidence type="ECO:0000305" key="7"/>
<protein>
    <recommendedName>
        <fullName>Probable ATP-dependent Clp protease proteolytic subunit</fullName>
        <ecNumber>3.4.21.92</ecNumber>
    </recommendedName>
    <alternativeName>
        <fullName>Endopeptidase Clp</fullName>
    </alternativeName>
</protein>
<name>CLPPH_POPEU</name>
<feature type="chain" id="PRO_0000307115" description="Probable ATP-dependent Clp protease proteolytic subunit">
    <location>
        <begin position="1" status="less than"/>
        <end position="22" status="greater than"/>
    </location>
</feature>
<feature type="non-consecutive residues" evidence="6">
    <location>
        <begin position="11"/>
        <end position="12"/>
    </location>
</feature>
<feature type="non-terminal residue" evidence="6">
    <location>
        <position position="1"/>
    </location>
</feature>
<feature type="non-terminal residue" evidence="6">
    <location>
        <position position="22"/>
    </location>
</feature>
<comment type="function">
    <text evidence="1">Cleaves peptides in various proteins in a process that requires ATP hydrolysis. Has a chymotrypsin-like activity. Plays a major role in the degradation of misfolded proteins (By similarity).</text>
</comment>
<comment type="catalytic activity">
    <reaction evidence="1 3 4">
        <text>Hydrolysis of proteins to small peptides in the presence of ATP and magnesium. alpha-casein is the usual test substrate. In the absence of ATP, only oligopeptides shorter than five residues are hydrolyzed (such as succinyl-Leu-Tyr-|-NHMec, and Leu-Tyr-Leu-|-Tyr-Trp, in which cleavage of the -Tyr-|-Leu- and -Tyr-|-Trp bonds also occurs).</text>
        <dbReference type="EC" id="3.4.21.92"/>
    </reaction>
</comment>
<comment type="subunit">
    <text>Component of the chloroplastic Clp protease core complex.</text>
</comment>
<comment type="similarity">
    <text evidence="2">Belongs to the peptidase S14 family.</text>
</comment>
<dbReference type="EC" id="3.4.21.92"/>
<dbReference type="Proteomes" id="UP000694918">
    <property type="component" value="Unplaced"/>
</dbReference>
<dbReference type="GO" id="GO:0004252">
    <property type="term" value="F:serine-type endopeptidase activity"/>
    <property type="evidence" value="ECO:0007669"/>
    <property type="project" value="UniProtKB-EC"/>
</dbReference>
<dbReference type="GO" id="GO:0006508">
    <property type="term" value="P:proteolysis"/>
    <property type="evidence" value="ECO:0007669"/>
    <property type="project" value="UniProtKB-KW"/>
</dbReference>
<reference evidence="7" key="1">
    <citation type="thesis" date="2006" institute="ICAT-FCUL" country="Portugal">
        <title>Molecular analysis of Populus euphratica Oliv. response to moderate heat stress.</title>
        <authorList>
            <person name="Ferreira S."/>
        </authorList>
    </citation>
    <scope>PROTEIN SEQUENCE</scope>
    <source>
        <tissue evidence="5">Leaf</tissue>
    </source>
</reference>
<proteinExistence type="evidence at protein level"/>
<organism>
    <name type="scientific">Populus euphratica</name>
    <name type="common">Euphrates poplar</name>
    <dbReference type="NCBI Taxonomy" id="75702"/>
    <lineage>
        <taxon>Eukaryota</taxon>
        <taxon>Viridiplantae</taxon>
        <taxon>Streptophyta</taxon>
        <taxon>Embryophyta</taxon>
        <taxon>Tracheophyta</taxon>
        <taxon>Spermatophyta</taxon>
        <taxon>Magnoliopsida</taxon>
        <taxon>eudicotyledons</taxon>
        <taxon>Gunneridae</taxon>
        <taxon>Pentapetalae</taxon>
        <taxon>rosids</taxon>
        <taxon>fabids</taxon>
        <taxon>Malpighiales</taxon>
        <taxon>Salicaceae</taxon>
        <taxon>Saliceae</taxon>
        <taxon>Populus</taxon>
    </lineage>
</organism>
<accession>P84982</accession>